<protein>
    <recommendedName>
        <fullName>Chaperonin 60 subunit alpha 2, chloroplastic</fullName>
        <shortName>CPN-60 alpha 2</shortName>
    </recommendedName>
    <alternativeName>
        <fullName>Protein EMBRYO DEFECTIVE 3007</fullName>
    </alternativeName>
</protein>
<comment type="function">
    <text evidence="1">Involved in protein assisted folding.</text>
</comment>
<comment type="subunit">
    <text evidence="1">Part of the Cpn60 complex composed of 7 alpha and 7 beta subunits.</text>
</comment>
<comment type="subcellular location">
    <subcellularLocation>
        <location evidence="4">Plastid</location>
        <location evidence="4">Chloroplast</location>
    </subcellularLocation>
</comment>
<comment type="similarity">
    <text evidence="4">Belongs to the chaperonin (HSP60) family.</text>
</comment>
<accession>Q56XV8</accession>
<gene>
    <name type="primary">CPN60A2</name>
    <name type="synonym">Cpn60-A(1)</name>
    <name type="synonym">EMB3007</name>
    <name type="ordered locus">At5g18820</name>
    <name type="ORF">F17K4.70</name>
</gene>
<evidence type="ECO:0000250" key="1"/>
<evidence type="ECO:0000255" key="2"/>
<evidence type="ECO:0000256" key="3">
    <source>
        <dbReference type="SAM" id="MobiDB-lite"/>
    </source>
</evidence>
<evidence type="ECO:0000305" key="4"/>
<reference key="1">
    <citation type="journal article" date="2000" name="Nature">
        <title>Sequence and analysis of chromosome 5 of the plant Arabidopsis thaliana.</title>
        <authorList>
            <person name="Tabata S."/>
            <person name="Kaneko T."/>
            <person name="Nakamura Y."/>
            <person name="Kotani H."/>
            <person name="Kato T."/>
            <person name="Asamizu E."/>
            <person name="Miyajima N."/>
            <person name="Sasamoto S."/>
            <person name="Kimura T."/>
            <person name="Hosouchi T."/>
            <person name="Kawashima K."/>
            <person name="Kohara M."/>
            <person name="Matsumoto M."/>
            <person name="Matsuno A."/>
            <person name="Muraki A."/>
            <person name="Nakayama S."/>
            <person name="Nakazaki N."/>
            <person name="Naruo K."/>
            <person name="Okumura S."/>
            <person name="Shinpo S."/>
            <person name="Takeuchi C."/>
            <person name="Wada T."/>
            <person name="Watanabe A."/>
            <person name="Yamada M."/>
            <person name="Yasuda M."/>
            <person name="Sato S."/>
            <person name="de la Bastide M."/>
            <person name="Huang E."/>
            <person name="Spiegel L."/>
            <person name="Gnoj L."/>
            <person name="O'Shaughnessy A."/>
            <person name="Preston R."/>
            <person name="Habermann K."/>
            <person name="Murray J."/>
            <person name="Johnson D."/>
            <person name="Rohlfing T."/>
            <person name="Nelson J."/>
            <person name="Stoneking T."/>
            <person name="Pepin K."/>
            <person name="Spieth J."/>
            <person name="Sekhon M."/>
            <person name="Armstrong J."/>
            <person name="Becker M."/>
            <person name="Belter E."/>
            <person name="Cordum H."/>
            <person name="Cordes M."/>
            <person name="Courtney L."/>
            <person name="Courtney W."/>
            <person name="Dante M."/>
            <person name="Du H."/>
            <person name="Edwards J."/>
            <person name="Fryman J."/>
            <person name="Haakensen B."/>
            <person name="Lamar E."/>
            <person name="Latreille P."/>
            <person name="Leonard S."/>
            <person name="Meyer R."/>
            <person name="Mulvaney E."/>
            <person name="Ozersky P."/>
            <person name="Riley A."/>
            <person name="Strowmatt C."/>
            <person name="Wagner-McPherson C."/>
            <person name="Wollam A."/>
            <person name="Yoakum M."/>
            <person name="Bell M."/>
            <person name="Dedhia N."/>
            <person name="Parnell L."/>
            <person name="Shah R."/>
            <person name="Rodriguez M."/>
            <person name="Hoon See L."/>
            <person name="Vil D."/>
            <person name="Baker J."/>
            <person name="Kirchoff K."/>
            <person name="Toth K."/>
            <person name="King L."/>
            <person name="Bahret A."/>
            <person name="Miller B."/>
            <person name="Marra M.A."/>
            <person name="Martienssen R."/>
            <person name="McCombie W.R."/>
            <person name="Wilson R.K."/>
            <person name="Murphy G."/>
            <person name="Bancroft I."/>
            <person name="Volckaert G."/>
            <person name="Wambutt R."/>
            <person name="Duesterhoeft A."/>
            <person name="Stiekema W."/>
            <person name="Pohl T."/>
            <person name="Entian K.-D."/>
            <person name="Terryn N."/>
            <person name="Hartley N."/>
            <person name="Bent E."/>
            <person name="Johnson S."/>
            <person name="Langham S.-A."/>
            <person name="McCullagh B."/>
            <person name="Robben J."/>
            <person name="Grymonprez B."/>
            <person name="Zimmermann W."/>
            <person name="Ramsperger U."/>
            <person name="Wedler H."/>
            <person name="Balke K."/>
            <person name="Wedler E."/>
            <person name="Peters S."/>
            <person name="van Staveren M."/>
            <person name="Dirkse W."/>
            <person name="Mooijman P."/>
            <person name="Klein Lankhorst R."/>
            <person name="Weitzenegger T."/>
            <person name="Bothe G."/>
            <person name="Rose M."/>
            <person name="Hauf J."/>
            <person name="Berneiser S."/>
            <person name="Hempel S."/>
            <person name="Feldpausch M."/>
            <person name="Lamberth S."/>
            <person name="Villarroel R."/>
            <person name="Gielen J."/>
            <person name="Ardiles W."/>
            <person name="Bents O."/>
            <person name="Lemcke K."/>
            <person name="Kolesov G."/>
            <person name="Mayer K.F.X."/>
            <person name="Rudd S."/>
            <person name="Schoof H."/>
            <person name="Schueller C."/>
            <person name="Zaccaria P."/>
            <person name="Mewes H.-W."/>
            <person name="Bevan M."/>
            <person name="Fransz P.F."/>
        </authorList>
    </citation>
    <scope>NUCLEOTIDE SEQUENCE [LARGE SCALE GENOMIC DNA]</scope>
    <source>
        <strain>cv. Columbia</strain>
    </source>
</reference>
<reference key="2">
    <citation type="journal article" date="2017" name="Plant J.">
        <title>Araport11: a complete reannotation of the Arabidopsis thaliana reference genome.</title>
        <authorList>
            <person name="Cheng C.Y."/>
            <person name="Krishnakumar V."/>
            <person name="Chan A.P."/>
            <person name="Thibaud-Nissen F."/>
            <person name="Schobel S."/>
            <person name="Town C.D."/>
        </authorList>
    </citation>
    <scope>GENOME REANNOTATION</scope>
    <source>
        <strain>cv. Columbia</strain>
    </source>
</reference>
<reference key="3">
    <citation type="submission" date="2005-03" db="EMBL/GenBank/DDBJ databases">
        <title>Large-scale analysis of RIKEN Arabidopsis full-length (RAFL) cDNAs.</title>
        <authorList>
            <person name="Totoki Y."/>
            <person name="Seki M."/>
            <person name="Ishida J."/>
            <person name="Nakajima M."/>
            <person name="Enju A."/>
            <person name="Kamiya A."/>
            <person name="Narusaka M."/>
            <person name="Shin-i T."/>
            <person name="Nakagawa M."/>
            <person name="Sakamoto N."/>
            <person name="Oishi K."/>
            <person name="Kohara Y."/>
            <person name="Kobayashi M."/>
            <person name="Toyoda A."/>
            <person name="Sakaki Y."/>
            <person name="Sakurai T."/>
            <person name="Iida K."/>
            <person name="Akiyama K."/>
            <person name="Satou M."/>
            <person name="Toyoda T."/>
            <person name="Konagaya A."/>
            <person name="Carninci P."/>
            <person name="Kawai J."/>
            <person name="Hayashizaki Y."/>
            <person name="Shinozaki K."/>
        </authorList>
    </citation>
    <scope>NUCLEOTIDE SEQUENCE [LARGE SCALE MRNA]</scope>
    <source>
        <strain>cv. Columbia</strain>
    </source>
</reference>
<reference key="4">
    <citation type="journal article" date="2001" name="Cell Stress Chaperones">
        <title>Arabidopsis thaliana type I and II chaperonins.</title>
        <authorList>
            <person name="Hill J.E."/>
            <person name="Hemmingsen S.M."/>
        </authorList>
    </citation>
    <scope>GENE FAMILY</scope>
    <scope>NOMENCLATURE</scope>
</reference>
<reference key="5">
    <citation type="journal article" date="2011" name="PLoS Biol.">
        <title>A chaperonin subunit with unique structures is essential for folding of a specific substrate.</title>
        <authorList>
            <person name="Peng L."/>
            <person name="Fukao Y."/>
            <person name="Myouga F."/>
            <person name="Motohashi R."/>
            <person name="Shinozaki K."/>
            <person name="Shikanai T."/>
        </authorList>
    </citation>
    <scope>GENE FAMILY</scope>
    <scope>NOMENCLATURE</scope>
</reference>
<dbReference type="EMBL" id="AC068655">
    <property type="status" value="NOT_ANNOTATED_CDS"/>
    <property type="molecule type" value="Genomic_DNA"/>
</dbReference>
<dbReference type="EMBL" id="CP002688">
    <property type="protein sequence ID" value="AED92616.1"/>
    <property type="molecule type" value="Genomic_DNA"/>
</dbReference>
<dbReference type="EMBL" id="AK221565">
    <property type="protein sequence ID" value="BAD94998.1"/>
    <property type="molecule type" value="mRNA"/>
</dbReference>
<dbReference type="RefSeq" id="NP_197383.1">
    <property type="nucleotide sequence ID" value="NM_121887.3"/>
</dbReference>
<dbReference type="SMR" id="Q56XV8"/>
<dbReference type="BioGRID" id="17276">
    <property type="interactions" value="3"/>
</dbReference>
<dbReference type="FunCoup" id="Q56XV8">
    <property type="interactions" value="319"/>
</dbReference>
<dbReference type="IntAct" id="Q56XV8">
    <property type="interactions" value="3"/>
</dbReference>
<dbReference type="STRING" id="3702.Q56XV8"/>
<dbReference type="PaxDb" id="3702-AT5G18820.1"/>
<dbReference type="EnsemblPlants" id="AT5G18820.1">
    <property type="protein sequence ID" value="AT5G18820.1"/>
    <property type="gene ID" value="AT5G18820"/>
</dbReference>
<dbReference type="GeneID" id="832000"/>
<dbReference type="Gramene" id="AT5G18820.1">
    <property type="protein sequence ID" value="AT5G18820.1"/>
    <property type="gene ID" value="AT5G18820"/>
</dbReference>
<dbReference type="KEGG" id="ath:AT5G18820"/>
<dbReference type="Araport" id="AT5G18820"/>
<dbReference type="TAIR" id="AT5G18820">
    <property type="gene designation" value="CPNA2"/>
</dbReference>
<dbReference type="eggNOG" id="KOG0356">
    <property type="taxonomic scope" value="Eukaryota"/>
</dbReference>
<dbReference type="HOGENOM" id="CLU_016503_1_1_1"/>
<dbReference type="InParanoid" id="Q56XV8"/>
<dbReference type="OMA" id="CMMVDSE"/>
<dbReference type="OrthoDB" id="1733909at2759"/>
<dbReference type="PhylomeDB" id="Q56XV8"/>
<dbReference type="PRO" id="PR:Q56XV8"/>
<dbReference type="Proteomes" id="UP000006548">
    <property type="component" value="Chromosome 5"/>
</dbReference>
<dbReference type="ExpressionAtlas" id="Q56XV8">
    <property type="expression patterns" value="baseline and differential"/>
</dbReference>
<dbReference type="GO" id="GO:0009507">
    <property type="term" value="C:chloroplast"/>
    <property type="evidence" value="ECO:0000314"/>
    <property type="project" value="TAIR"/>
</dbReference>
<dbReference type="GO" id="GO:0005524">
    <property type="term" value="F:ATP binding"/>
    <property type="evidence" value="ECO:0007669"/>
    <property type="project" value="UniProtKB-KW"/>
</dbReference>
<dbReference type="GO" id="GO:0140662">
    <property type="term" value="F:ATP-dependent protein folding chaperone"/>
    <property type="evidence" value="ECO:0007669"/>
    <property type="project" value="InterPro"/>
</dbReference>
<dbReference type="GO" id="GO:0042026">
    <property type="term" value="P:protein refolding"/>
    <property type="evidence" value="ECO:0007669"/>
    <property type="project" value="InterPro"/>
</dbReference>
<dbReference type="CDD" id="cd03344">
    <property type="entry name" value="GroEL"/>
    <property type="match status" value="1"/>
</dbReference>
<dbReference type="FunFam" id="3.50.7.10:FF:000001">
    <property type="entry name" value="60 kDa chaperonin"/>
    <property type="match status" value="1"/>
</dbReference>
<dbReference type="Gene3D" id="3.50.7.10">
    <property type="entry name" value="GroEL"/>
    <property type="match status" value="1"/>
</dbReference>
<dbReference type="Gene3D" id="1.10.560.10">
    <property type="entry name" value="GroEL-like equatorial domain"/>
    <property type="match status" value="1"/>
</dbReference>
<dbReference type="Gene3D" id="3.30.260.10">
    <property type="entry name" value="TCP-1-like chaperonin intermediate domain"/>
    <property type="match status" value="1"/>
</dbReference>
<dbReference type="InterPro" id="IPR001844">
    <property type="entry name" value="Cpn60/GroEL"/>
</dbReference>
<dbReference type="InterPro" id="IPR002423">
    <property type="entry name" value="Cpn60/GroEL/TCP-1"/>
</dbReference>
<dbReference type="InterPro" id="IPR027409">
    <property type="entry name" value="GroEL-like_apical_dom_sf"/>
</dbReference>
<dbReference type="InterPro" id="IPR027413">
    <property type="entry name" value="GROEL-like_equatorial_sf"/>
</dbReference>
<dbReference type="InterPro" id="IPR027410">
    <property type="entry name" value="TCP-1-like_intermed_sf"/>
</dbReference>
<dbReference type="NCBIfam" id="TIGR02348">
    <property type="entry name" value="GroEL"/>
    <property type="match status" value="1"/>
</dbReference>
<dbReference type="NCBIfam" id="NF000592">
    <property type="entry name" value="PRK00013.1"/>
    <property type="match status" value="1"/>
</dbReference>
<dbReference type="NCBIfam" id="NF009487">
    <property type="entry name" value="PRK12849.1"/>
    <property type="match status" value="1"/>
</dbReference>
<dbReference type="NCBIfam" id="NF009488">
    <property type="entry name" value="PRK12850.1"/>
    <property type="match status" value="1"/>
</dbReference>
<dbReference type="NCBIfam" id="NF009489">
    <property type="entry name" value="PRK12851.1"/>
    <property type="match status" value="1"/>
</dbReference>
<dbReference type="PANTHER" id="PTHR45633">
    <property type="entry name" value="60 KDA HEAT SHOCK PROTEIN, MITOCHONDRIAL"/>
    <property type="match status" value="1"/>
</dbReference>
<dbReference type="Pfam" id="PF00118">
    <property type="entry name" value="Cpn60_TCP1"/>
    <property type="match status" value="1"/>
</dbReference>
<dbReference type="PRINTS" id="PR00298">
    <property type="entry name" value="CHAPERONIN60"/>
</dbReference>
<dbReference type="SUPFAM" id="SSF52029">
    <property type="entry name" value="GroEL apical domain-like"/>
    <property type="match status" value="1"/>
</dbReference>
<dbReference type="SUPFAM" id="SSF48592">
    <property type="entry name" value="GroEL equatorial domain-like"/>
    <property type="match status" value="1"/>
</dbReference>
<dbReference type="SUPFAM" id="SSF54849">
    <property type="entry name" value="GroEL-intermediate domain like"/>
    <property type="match status" value="2"/>
</dbReference>
<sequence>MFAVSPSSFSPTTISPRRSGQRNEPRKFSVVRAGAKRILYGKDSREKLQAGIDKLADAVSITLGPRGRNVVLAEKDTIKVINDGVTIAKSIELPDTIENAGATLIQEVAIKMNESAGDGTTTAIILAREMIKAGSLAIAFGANAVSVKNGMNKTVKELVRVLQMKSIPVQGKNDIKAVASISAGNDEFVGNLIAETVEKIGPDGVISIESSSTSETSVIVEEGMKFDKGYMSPHFITNQEKSTVEFDKAKILVTDQKITSAKELVPLLEKTSQLSVPLLIIAEDISAEVLEILVVNKKQGLINVAVVKCPGMLDGKKALLQDIALMTGADYLSGDLGMSLMGATSDQLGVSRRVVITANSTTIVADASTKPEIQARIAQMKKDLAETDNSYLSKKIAERIAKLTGGVAVIKVGGHTETELEDRKLRIEDAKNATFAAMREGIVPGGGATYIHLLDEIPRIKKNLMEDSYEQIGADIVAMALTAPAMAIATNAGVDGSVVVQKTRELEWRSGYNAMSGKYEDLLNAGIADPCRVSRFALQNAVSVAGIILTTQAVLVEKIKQPKPAVPQVPGIPTS</sequence>
<name>CPNA2_ARATH</name>
<feature type="transit peptide" description="Chloroplast" evidence="2">
    <location>
        <begin position="1"/>
        <end position="32"/>
    </location>
</feature>
<feature type="chain" id="PRO_0000413683" description="Chaperonin 60 subunit alpha 2, chloroplastic">
    <location>
        <begin position="33"/>
        <end position="575"/>
    </location>
</feature>
<feature type="region of interest" description="Disordered" evidence="3">
    <location>
        <begin position="1"/>
        <end position="27"/>
    </location>
</feature>
<feature type="compositionally biased region" description="Low complexity" evidence="3">
    <location>
        <begin position="1"/>
        <end position="18"/>
    </location>
</feature>
<organism>
    <name type="scientific">Arabidopsis thaliana</name>
    <name type="common">Mouse-ear cress</name>
    <dbReference type="NCBI Taxonomy" id="3702"/>
    <lineage>
        <taxon>Eukaryota</taxon>
        <taxon>Viridiplantae</taxon>
        <taxon>Streptophyta</taxon>
        <taxon>Embryophyta</taxon>
        <taxon>Tracheophyta</taxon>
        <taxon>Spermatophyta</taxon>
        <taxon>Magnoliopsida</taxon>
        <taxon>eudicotyledons</taxon>
        <taxon>Gunneridae</taxon>
        <taxon>Pentapetalae</taxon>
        <taxon>rosids</taxon>
        <taxon>malvids</taxon>
        <taxon>Brassicales</taxon>
        <taxon>Brassicaceae</taxon>
        <taxon>Camelineae</taxon>
        <taxon>Arabidopsis</taxon>
    </lineage>
</organism>
<proteinExistence type="evidence at transcript level"/>
<keyword id="KW-0067">ATP-binding</keyword>
<keyword id="KW-0143">Chaperone</keyword>
<keyword id="KW-0150">Chloroplast</keyword>
<keyword id="KW-0547">Nucleotide-binding</keyword>
<keyword id="KW-0934">Plastid</keyword>
<keyword id="KW-1185">Reference proteome</keyword>
<keyword id="KW-0809">Transit peptide</keyword>